<reference key="1">
    <citation type="journal article" date="1987" name="DNA">
        <title>Characterization of pancreatic elastase II cDNAs: two elastase II mRNAs are expressed in human pancreas.</title>
        <authorList>
            <person name="Kawashima I."/>
            <person name="Tani T."/>
            <person name="Shimoda K."/>
            <person name="Takiguchi Y."/>
        </authorList>
    </citation>
    <scope>NUCLEOTIDE SEQUENCE [MRNA]</scope>
</reference>
<reference key="2">
    <citation type="journal article" date="1987" name="J. Biochem.">
        <title>Molecular cloning and expression in Escherichia coli of a cDNA encoding human pancreatic elastase 2.</title>
        <authorList>
            <person name="Shirasu Y."/>
            <person name="Yoshida H."/>
            <person name="Matsuki S."/>
            <person name="Takemura K."/>
            <person name="Ikeda N."/>
            <person name="Shimada Y."/>
            <person name="Ozawa T."/>
            <person name="Mikayama T."/>
            <person name="Iijima H."/>
            <person name="Ishida A."/>
            <person name="Sato Y."/>
            <person name="Tamai Y."/>
            <person name="Tanaka J."/>
            <person name="Ikenaga H."/>
        </authorList>
    </citation>
    <scope>NUCLEOTIDE SEQUENCE [MRNA]</scope>
</reference>
<reference key="3">
    <citation type="submission" date="1999-08" db="PDB data bank">
        <title>Structure of porcine pancreatic elastase complexed with the elastase inhibitor GR143783.</title>
        <authorList>
            <person name="Jhoti H."/>
            <person name="Singh O.M.P."/>
            <person name="Wonacott A."/>
        </authorList>
    </citation>
    <scope>X-RAY CRYSTALLOGRAPHY (2.30 ANGSTROMS) OF 29-269 IN COMPLEX WITH INHIBITOR</scope>
    <scope>DISULFIDE BONDS</scope>
</reference>
<sequence length="269" mass="28699">MIRALLLSTLVAGALSCGLPANLPQLPRVVGGEDARPNSWPWQVSLQYDSSGQWRHTCGGTLVDQSWVLTAAHCISSSRTYRVVLGRHSLSTNEPGSLAVKVSKLVVHQDWNSNQLSNGNDIALLKLASPVSLTDKIQLGCLPAAGTILPNNYVCYVTGWGRLQTNGASPDILQQGQLLVVDYATCSKPGWWGSTVKTNMICAGGDGIISSCNGDSGGPLNCQGANGQWQVHGIVSFGSSLGCNYYHKPSVFTRVSNYIDWINSVIANN</sequence>
<organism>
    <name type="scientific">Sus scrofa</name>
    <name type="common">Pig</name>
    <dbReference type="NCBI Taxonomy" id="9823"/>
    <lineage>
        <taxon>Eukaryota</taxon>
        <taxon>Metazoa</taxon>
        <taxon>Chordata</taxon>
        <taxon>Craniata</taxon>
        <taxon>Vertebrata</taxon>
        <taxon>Euteleostomi</taxon>
        <taxon>Mammalia</taxon>
        <taxon>Eutheria</taxon>
        <taxon>Laurasiatheria</taxon>
        <taxon>Artiodactyla</taxon>
        <taxon>Suina</taxon>
        <taxon>Suidae</taxon>
        <taxon>Sus</taxon>
    </lineage>
</organism>
<dbReference type="EC" id="3.4.21.71"/>
<dbReference type="EMBL" id="M16651">
    <property type="protein sequence ID" value="AAA31027.1"/>
    <property type="molecule type" value="mRNA"/>
</dbReference>
<dbReference type="EMBL" id="D00237">
    <property type="protein sequence ID" value="BAA00166.1"/>
    <property type="molecule type" value="mRNA"/>
</dbReference>
<dbReference type="PIR" id="A26823">
    <property type="entry name" value="A26823"/>
</dbReference>
<dbReference type="RefSeq" id="NP_999274.1">
    <property type="nucleotide sequence ID" value="NM_214109.1"/>
</dbReference>
<dbReference type="PDB" id="1BRU">
    <property type="method" value="X-ray"/>
    <property type="resolution" value="2.30 A"/>
    <property type="chains" value="P=29-269"/>
</dbReference>
<dbReference type="PDBsum" id="1BRU"/>
<dbReference type="SMR" id="P08419"/>
<dbReference type="FunCoup" id="P08419">
    <property type="interactions" value="108"/>
</dbReference>
<dbReference type="STRING" id="9823.ENSSSCP00000065549"/>
<dbReference type="BindingDB" id="P08419"/>
<dbReference type="ChEMBL" id="CHEMBL2407"/>
<dbReference type="MEROPS" id="S01.155"/>
<dbReference type="PaxDb" id="9823-ENSSSCP00000003756"/>
<dbReference type="Ensembl" id="ENSSSCT00000003844.2">
    <property type="protein sequence ID" value="ENSSSCP00000003756.1"/>
    <property type="gene ID" value="ENSSSCG00000003459.5"/>
</dbReference>
<dbReference type="Ensembl" id="ENSSSCT00015008561.1">
    <property type="protein sequence ID" value="ENSSSCP00015003454.1"/>
    <property type="gene ID" value="ENSSSCG00015006425.1"/>
</dbReference>
<dbReference type="Ensembl" id="ENSSSCT00025020625.1">
    <property type="protein sequence ID" value="ENSSSCP00025008470.1"/>
    <property type="gene ID" value="ENSSSCG00025015386.1"/>
</dbReference>
<dbReference type="Ensembl" id="ENSSSCT00045061101.1">
    <property type="protein sequence ID" value="ENSSSCP00045042921.1"/>
    <property type="gene ID" value="ENSSSCG00045035588.1"/>
</dbReference>
<dbReference type="Ensembl" id="ENSSSCT00070059036.1">
    <property type="protein sequence ID" value="ENSSSCP00070050247.1"/>
    <property type="gene ID" value="ENSSSCG00070029390.1"/>
</dbReference>
<dbReference type="Ensembl" id="ENSSSCT00110058594">
    <property type="protein sequence ID" value="ENSSSCP00110040827"/>
    <property type="gene ID" value="ENSSSCG00110030683"/>
</dbReference>
<dbReference type="Ensembl" id="ENSSSCT00115022831">
    <property type="protein sequence ID" value="ENSSSCP00115021641"/>
    <property type="gene ID" value="ENSSSCG00115013217"/>
</dbReference>
<dbReference type="Ensembl" id="ENSSSCT00130057995">
    <property type="protein sequence ID" value="ENSSSCP00130041585"/>
    <property type="gene ID" value="ENSSSCG00130029687"/>
</dbReference>
<dbReference type="GeneID" id="397197"/>
<dbReference type="KEGG" id="ssc:397197"/>
<dbReference type="CTD" id="63036"/>
<dbReference type="eggNOG" id="KOG3627">
    <property type="taxonomic scope" value="Eukaryota"/>
</dbReference>
<dbReference type="GeneTree" id="ENSGT01030000234528"/>
<dbReference type="HOGENOM" id="CLU_006842_0_4_1"/>
<dbReference type="InParanoid" id="P08419"/>
<dbReference type="OMA" id="GSTLGCN"/>
<dbReference type="OrthoDB" id="10061449at2759"/>
<dbReference type="TreeFam" id="TF330455"/>
<dbReference type="Reactome" id="R-SSC-6809371">
    <property type="pathway name" value="Formation of the cornified envelope"/>
</dbReference>
<dbReference type="EvolutionaryTrace" id="P08419"/>
<dbReference type="PRO" id="PR:P08419"/>
<dbReference type="Proteomes" id="UP000008227">
    <property type="component" value="Chromosome 6"/>
</dbReference>
<dbReference type="Proteomes" id="UP000314985">
    <property type="component" value="Chromosome 6"/>
</dbReference>
<dbReference type="Proteomes" id="UP000694570">
    <property type="component" value="Unplaced"/>
</dbReference>
<dbReference type="Proteomes" id="UP000694571">
    <property type="component" value="Unplaced"/>
</dbReference>
<dbReference type="Proteomes" id="UP000694720">
    <property type="component" value="Unplaced"/>
</dbReference>
<dbReference type="Proteomes" id="UP000694722">
    <property type="component" value="Unplaced"/>
</dbReference>
<dbReference type="Proteomes" id="UP000694723">
    <property type="component" value="Unplaced"/>
</dbReference>
<dbReference type="Proteomes" id="UP000694724">
    <property type="component" value="Unplaced"/>
</dbReference>
<dbReference type="Proteomes" id="UP000694725">
    <property type="component" value="Unplaced"/>
</dbReference>
<dbReference type="Proteomes" id="UP000694726">
    <property type="component" value="Unplaced"/>
</dbReference>
<dbReference type="Proteomes" id="UP000694727">
    <property type="component" value="Unplaced"/>
</dbReference>
<dbReference type="Proteomes" id="UP000694728">
    <property type="component" value="Unplaced"/>
</dbReference>
<dbReference type="Bgee" id="ENSSSCG00000003459">
    <property type="expression patterns" value="Expressed in testis and 20 other cell types or tissues"/>
</dbReference>
<dbReference type="GO" id="GO:0005576">
    <property type="term" value="C:extracellular region"/>
    <property type="evidence" value="ECO:0000250"/>
    <property type="project" value="UniProtKB"/>
</dbReference>
<dbReference type="GO" id="GO:0005615">
    <property type="term" value="C:extracellular space"/>
    <property type="evidence" value="ECO:0000318"/>
    <property type="project" value="GO_Central"/>
</dbReference>
<dbReference type="GO" id="GO:0004175">
    <property type="term" value="F:endopeptidase activity"/>
    <property type="evidence" value="ECO:0000250"/>
    <property type="project" value="UniProtKB"/>
</dbReference>
<dbReference type="GO" id="GO:0004252">
    <property type="term" value="F:serine-type endopeptidase activity"/>
    <property type="evidence" value="ECO:0000318"/>
    <property type="project" value="GO_Central"/>
</dbReference>
<dbReference type="GO" id="GO:1901143">
    <property type="term" value="P:insulin catabolic process"/>
    <property type="evidence" value="ECO:0000250"/>
    <property type="project" value="UniProtKB"/>
</dbReference>
<dbReference type="GO" id="GO:0006508">
    <property type="term" value="P:proteolysis"/>
    <property type="evidence" value="ECO:0000318"/>
    <property type="project" value="GO_Central"/>
</dbReference>
<dbReference type="GO" id="GO:0050796">
    <property type="term" value="P:regulation of insulin secretion"/>
    <property type="evidence" value="ECO:0000250"/>
    <property type="project" value="UniProtKB"/>
</dbReference>
<dbReference type="GO" id="GO:0090330">
    <property type="term" value="P:regulation of platelet aggregation"/>
    <property type="evidence" value="ECO:0000250"/>
    <property type="project" value="UniProtKB"/>
</dbReference>
<dbReference type="GO" id="GO:0032868">
    <property type="term" value="P:response to insulin"/>
    <property type="evidence" value="ECO:0000250"/>
    <property type="project" value="UniProtKB"/>
</dbReference>
<dbReference type="CDD" id="cd00190">
    <property type="entry name" value="Tryp_SPc"/>
    <property type="match status" value="1"/>
</dbReference>
<dbReference type="FunFam" id="2.40.10.10:FF:000280">
    <property type="match status" value="1"/>
</dbReference>
<dbReference type="FunFam" id="2.40.10.10:FF:000004">
    <property type="entry name" value="Tryptase gamma 1"/>
    <property type="match status" value="1"/>
</dbReference>
<dbReference type="Gene3D" id="2.40.10.10">
    <property type="entry name" value="Trypsin-like serine proteases"/>
    <property type="match status" value="2"/>
</dbReference>
<dbReference type="InterPro" id="IPR050850">
    <property type="entry name" value="Peptidase_S1_Elastase_sf"/>
</dbReference>
<dbReference type="InterPro" id="IPR009003">
    <property type="entry name" value="Peptidase_S1_PA"/>
</dbReference>
<dbReference type="InterPro" id="IPR043504">
    <property type="entry name" value="Peptidase_S1_PA_chymotrypsin"/>
</dbReference>
<dbReference type="InterPro" id="IPR001314">
    <property type="entry name" value="Peptidase_S1A"/>
</dbReference>
<dbReference type="InterPro" id="IPR001254">
    <property type="entry name" value="Trypsin_dom"/>
</dbReference>
<dbReference type="InterPro" id="IPR018114">
    <property type="entry name" value="TRYPSIN_HIS"/>
</dbReference>
<dbReference type="InterPro" id="IPR033116">
    <property type="entry name" value="TRYPSIN_SER"/>
</dbReference>
<dbReference type="PANTHER" id="PTHR24257">
    <property type="entry name" value="CHYMOTRYPSIN-LIKE ELASTASE FAMILY MEMBER"/>
    <property type="match status" value="1"/>
</dbReference>
<dbReference type="PANTHER" id="PTHR24257:SF19">
    <property type="entry name" value="CHYMOTRYPSIN-LIKE ELASTASE FAMILY MEMBER 2B"/>
    <property type="match status" value="1"/>
</dbReference>
<dbReference type="Pfam" id="PF00089">
    <property type="entry name" value="Trypsin"/>
    <property type="match status" value="1"/>
</dbReference>
<dbReference type="PRINTS" id="PR00722">
    <property type="entry name" value="CHYMOTRYPSIN"/>
</dbReference>
<dbReference type="SMART" id="SM00020">
    <property type="entry name" value="Tryp_SPc"/>
    <property type="match status" value="1"/>
</dbReference>
<dbReference type="SUPFAM" id="SSF50494">
    <property type="entry name" value="Trypsin-like serine proteases"/>
    <property type="match status" value="1"/>
</dbReference>
<dbReference type="PROSITE" id="PS50240">
    <property type="entry name" value="TRYPSIN_DOM"/>
    <property type="match status" value="1"/>
</dbReference>
<dbReference type="PROSITE" id="PS00134">
    <property type="entry name" value="TRYPSIN_HIS"/>
    <property type="match status" value="1"/>
</dbReference>
<dbReference type="PROSITE" id="PS00135">
    <property type="entry name" value="TRYPSIN_SER"/>
    <property type="match status" value="1"/>
</dbReference>
<protein>
    <recommendedName>
        <fullName>Chymotrypsin-like elastase family member 2A</fullName>
        <ecNumber>3.4.21.71</ecNumber>
    </recommendedName>
    <alternativeName>
        <fullName>Elastase-2</fullName>
    </alternativeName>
    <alternativeName>
        <fullName>Elastase-2A</fullName>
    </alternativeName>
</protein>
<feature type="signal peptide">
    <location>
        <begin position="1"/>
        <end position="16"/>
    </location>
</feature>
<feature type="propeptide" id="PRO_0000027689" description="Activation peptide">
    <location>
        <begin position="17"/>
        <end position="28"/>
    </location>
</feature>
<feature type="chain" id="PRO_0000027690" description="Chymotrypsin-like elastase family member 2A">
    <location>
        <begin position="29"/>
        <end position="269"/>
    </location>
</feature>
<feature type="domain" description="Peptidase S1" evidence="2">
    <location>
        <begin position="29"/>
        <end position="267"/>
    </location>
</feature>
<feature type="active site" description="Charge relay system">
    <location>
        <position position="73"/>
    </location>
</feature>
<feature type="active site" description="Charge relay system">
    <location>
        <position position="121"/>
    </location>
</feature>
<feature type="active site" description="Charge relay system">
    <location>
        <position position="216"/>
    </location>
</feature>
<feature type="disulfide bond" evidence="2 3">
    <location>
        <begin position="58"/>
        <end position="74"/>
    </location>
</feature>
<feature type="disulfide bond" evidence="2 3">
    <location>
        <begin position="155"/>
        <end position="222"/>
    </location>
</feature>
<feature type="disulfide bond" evidence="2 3">
    <location>
        <begin position="186"/>
        <end position="202"/>
    </location>
</feature>
<feature type="disulfide bond" evidence="2 3">
    <location>
        <begin position="212"/>
        <end position="243"/>
    </location>
</feature>
<feature type="sequence conflict" description="In Ref. 2; BAA00166." evidence="4" ref="2">
    <original>L</original>
    <variation>S</variation>
    <location>
        <position position="10"/>
    </location>
</feature>
<feature type="sequence conflict" description="In Ref. 2; BAA00166." evidence="4" ref="2">
    <original>N</original>
    <variation>K</variation>
    <location>
        <position position="118"/>
    </location>
</feature>
<feature type="sequence conflict" description="In Ref. 2; BAA00166." evidence="4" ref="2">
    <original>S</original>
    <variation>Y</variation>
    <location>
        <position position="132"/>
    </location>
</feature>
<feature type="sequence conflict" description="In Ref. 2; BAA00166." evidence="4" ref="2">
    <original>I</original>
    <variation>V</variation>
    <location>
        <position position="172"/>
    </location>
</feature>
<feature type="sequence conflict" description="In Ref. 2; BAA00166." evidence="4" ref="2">
    <original>C</original>
    <variation>V</variation>
    <location>
        <position position="202"/>
    </location>
</feature>
<feature type="strand" evidence="5">
    <location>
        <begin position="43"/>
        <end position="50"/>
    </location>
</feature>
<feature type="strand" evidence="5">
    <location>
        <begin position="53"/>
        <end position="64"/>
    </location>
</feature>
<feature type="strand" evidence="5">
    <location>
        <begin position="67"/>
        <end position="70"/>
    </location>
</feature>
<feature type="helix" evidence="5">
    <location>
        <begin position="72"/>
        <end position="74"/>
    </location>
</feature>
<feature type="strand" evidence="5">
    <location>
        <begin position="81"/>
        <end position="86"/>
    </location>
</feature>
<feature type="strand" evidence="5">
    <location>
        <begin position="88"/>
        <end position="92"/>
    </location>
</feature>
<feature type="strand" evidence="5">
    <location>
        <begin position="98"/>
        <end position="107"/>
    </location>
</feature>
<feature type="helix" evidence="5">
    <location>
        <begin position="116"/>
        <end position="118"/>
    </location>
</feature>
<feature type="strand" evidence="5">
    <location>
        <begin position="123"/>
        <end position="129"/>
    </location>
</feature>
<feature type="strand" evidence="5">
    <location>
        <begin position="154"/>
        <end position="160"/>
    </location>
</feature>
<feature type="strand" evidence="5">
    <location>
        <begin position="174"/>
        <end position="181"/>
    </location>
</feature>
<feature type="helix" evidence="5">
    <location>
        <begin position="183"/>
        <end position="186"/>
    </location>
</feature>
<feature type="turn" evidence="5">
    <location>
        <begin position="189"/>
        <end position="192"/>
    </location>
</feature>
<feature type="helix" evidence="5">
    <location>
        <begin position="193"/>
        <end position="195"/>
    </location>
</feature>
<feature type="strand" evidence="5">
    <location>
        <begin position="200"/>
        <end position="203"/>
    </location>
</feature>
<feature type="strand" evidence="5">
    <location>
        <begin position="206"/>
        <end position="210"/>
    </location>
</feature>
<feature type="strand" evidence="5">
    <location>
        <begin position="219"/>
        <end position="223"/>
    </location>
</feature>
<feature type="strand" evidence="5">
    <location>
        <begin position="229"/>
        <end position="237"/>
    </location>
</feature>
<feature type="strand" evidence="5">
    <location>
        <begin position="242"/>
        <end position="244"/>
    </location>
</feature>
<feature type="strand" evidence="5">
    <location>
        <begin position="250"/>
        <end position="254"/>
    </location>
</feature>
<feature type="helix" evidence="5">
    <location>
        <begin position="255"/>
        <end position="257"/>
    </location>
</feature>
<feature type="helix" evidence="5">
    <location>
        <begin position="259"/>
        <end position="268"/>
    </location>
</feature>
<keyword id="KW-0002">3D-structure</keyword>
<keyword id="KW-1015">Disulfide bond</keyword>
<keyword id="KW-0378">Hydrolase</keyword>
<keyword id="KW-0645">Protease</keyword>
<keyword id="KW-1185">Reference proteome</keyword>
<keyword id="KW-0964">Secreted</keyword>
<keyword id="KW-0720">Serine protease</keyword>
<keyword id="KW-0732">Signal</keyword>
<keyword id="KW-0865">Zymogen</keyword>
<accession>P08419</accession>
<gene>
    <name type="primary">CELA2A</name>
    <name type="synonym">ELA2</name>
    <name type="synonym">ELA2A</name>
</gene>
<name>CEL2A_PIG</name>
<evidence type="ECO:0000250" key="1">
    <source>
        <dbReference type="UniProtKB" id="P08217"/>
    </source>
</evidence>
<evidence type="ECO:0000255" key="2">
    <source>
        <dbReference type="PROSITE-ProRule" id="PRU00274"/>
    </source>
</evidence>
<evidence type="ECO:0000269" key="3">
    <source ref="3"/>
</evidence>
<evidence type="ECO:0000305" key="4"/>
<evidence type="ECO:0007829" key="5">
    <source>
        <dbReference type="PDB" id="1BRU"/>
    </source>
</evidence>
<comment type="function">
    <text evidence="1">Elastase that enhances insulin signaling and might have a physiologic role in cellular glucose metabolism. Circulates in plasma and reduces platelet hyperactivation, triggers both insulin secretion and degradation, and increases insulin sensitivity.</text>
</comment>
<comment type="catalytic activity">
    <reaction evidence="1">
        <text>Preferential cleavage: Leu-|-Xaa, Met-|-Xaa and Phe-|-Xaa. Hydrolyzes elastin.</text>
        <dbReference type="EC" id="3.4.21.71"/>
    </reaction>
</comment>
<comment type="subunit">
    <text evidence="1">Interacts with CPA1. Interacts with SERPINA1.</text>
</comment>
<comment type="subcellular location">
    <subcellularLocation>
        <location evidence="1">Secreted</location>
    </subcellularLocation>
</comment>
<comment type="tissue specificity">
    <text>Pancreas.</text>
</comment>
<comment type="similarity">
    <text evidence="2">Belongs to the peptidase S1 family. Elastase subfamily.</text>
</comment>
<proteinExistence type="evidence at protein level"/>